<sequence length="626" mass="73009">MNVEVVKVMPQDLVTFKDVAIDFSQEEWQWMNPAQKRLYRSMMLENYQSLVSLGLCISKPYVISLLEQGREPWEMTSEMTRSPFSDWESIYVTQELPLKQFMYDDACMEGITSYGLECSTFEENWKWEDLFEKQMGSHEMFSKKEIITHKETITKETEFKYTKFGKCIHLENIEESIYNHTSDKKSFSKNSMVIKHKKVYVGKKLFKCNECDKTFTHSSSLTVHFRIHTGEKPYACEECGKAFKQRQHLAQHHRTHTGEKLFECKECRKAFKQSEHLIQHQRIHTGEKPYKCKECRKAFRQPAHLAQHQRIHTGEKPYECKECGKAFSDGSSFARHQRCHTGKRPYECIECGKAFRYNTSFIRHWRSYHTGEKPFNCIDCGKAFSVHIGLILHRRIHTGEKPYKCGVCGKTFSSGSSRTVHQRIHTGEKPYECDICGKDFSHHASLTQHQRVHSGEKPYECKECGKAFRQNVHLVSHLRIHTGEKPYECKECGKAFRISSQLATHQRIHTGEKPYECIECGNAFKQRSHLAQHQKTHTGEKPYECNECGKAFSQTSNLTQHQRIHTGEKPYKCTECGKAFSDSSSCAQHQRLHTGQRPYQCFECGKAFRRKLSLICHQRSHTGEEP</sequence>
<reference key="1">
    <citation type="submission" date="2001-02" db="EMBL/GenBank/DDBJ databases">
        <title>EZFIT-related protein 1.</title>
        <authorList>
            <person name="Mataki C."/>
            <person name="Murakami T."/>
            <person name="Umetani M."/>
            <person name="Wada Y."/>
            <person name="Hamakubo T."/>
            <person name="Kodama T."/>
        </authorList>
    </citation>
    <scope>NUCLEOTIDE SEQUENCE [MRNA] (ISOFORM 1)</scope>
    <source>
        <tissue>Pancreas</tissue>
    </source>
</reference>
<reference key="2">
    <citation type="journal article" date="2004" name="Nat. Genet.">
        <title>Complete sequencing and characterization of 21,243 full-length human cDNAs.</title>
        <authorList>
            <person name="Ota T."/>
            <person name="Suzuki Y."/>
            <person name="Nishikawa T."/>
            <person name="Otsuki T."/>
            <person name="Sugiyama T."/>
            <person name="Irie R."/>
            <person name="Wakamatsu A."/>
            <person name="Hayashi K."/>
            <person name="Sato H."/>
            <person name="Nagai K."/>
            <person name="Kimura K."/>
            <person name="Makita H."/>
            <person name="Sekine M."/>
            <person name="Obayashi M."/>
            <person name="Nishi T."/>
            <person name="Shibahara T."/>
            <person name="Tanaka T."/>
            <person name="Ishii S."/>
            <person name="Yamamoto J."/>
            <person name="Saito K."/>
            <person name="Kawai Y."/>
            <person name="Isono Y."/>
            <person name="Nakamura Y."/>
            <person name="Nagahari K."/>
            <person name="Murakami K."/>
            <person name="Yasuda T."/>
            <person name="Iwayanagi T."/>
            <person name="Wagatsuma M."/>
            <person name="Shiratori A."/>
            <person name="Sudo H."/>
            <person name="Hosoiri T."/>
            <person name="Kaku Y."/>
            <person name="Kodaira H."/>
            <person name="Kondo H."/>
            <person name="Sugawara M."/>
            <person name="Takahashi M."/>
            <person name="Kanda K."/>
            <person name="Yokoi T."/>
            <person name="Furuya T."/>
            <person name="Kikkawa E."/>
            <person name="Omura Y."/>
            <person name="Abe K."/>
            <person name="Kamihara K."/>
            <person name="Katsuta N."/>
            <person name="Sato K."/>
            <person name="Tanikawa M."/>
            <person name="Yamazaki M."/>
            <person name="Ninomiya K."/>
            <person name="Ishibashi T."/>
            <person name="Yamashita H."/>
            <person name="Murakawa K."/>
            <person name="Fujimori K."/>
            <person name="Tanai H."/>
            <person name="Kimata M."/>
            <person name="Watanabe M."/>
            <person name="Hiraoka S."/>
            <person name="Chiba Y."/>
            <person name="Ishida S."/>
            <person name="Ono Y."/>
            <person name="Takiguchi S."/>
            <person name="Watanabe S."/>
            <person name="Yosida M."/>
            <person name="Hotuta T."/>
            <person name="Kusano J."/>
            <person name="Kanehori K."/>
            <person name="Takahashi-Fujii A."/>
            <person name="Hara H."/>
            <person name="Tanase T.-O."/>
            <person name="Nomura Y."/>
            <person name="Togiya S."/>
            <person name="Komai F."/>
            <person name="Hara R."/>
            <person name="Takeuchi K."/>
            <person name="Arita M."/>
            <person name="Imose N."/>
            <person name="Musashino K."/>
            <person name="Yuuki H."/>
            <person name="Oshima A."/>
            <person name="Sasaki N."/>
            <person name="Aotsuka S."/>
            <person name="Yoshikawa Y."/>
            <person name="Matsunawa H."/>
            <person name="Ichihara T."/>
            <person name="Shiohata N."/>
            <person name="Sano S."/>
            <person name="Moriya S."/>
            <person name="Momiyama H."/>
            <person name="Satoh N."/>
            <person name="Takami S."/>
            <person name="Terashima Y."/>
            <person name="Suzuki O."/>
            <person name="Nakagawa S."/>
            <person name="Senoh A."/>
            <person name="Mizoguchi H."/>
            <person name="Goto Y."/>
            <person name="Shimizu F."/>
            <person name="Wakebe H."/>
            <person name="Hishigaki H."/>
            <person name="Watanabe T."/>
            <person name="Sugiyama A."/>
            <person name="Takemoto M."/>
            <person name="Kawakami B."/>
            <person name="Yamazaki M."/>
            <person name="Watanabe K."/>
            <person name="Kumagai A."/>
            <person name="Itakura S."/>
            <person name="Fukuzumi Y."/>
            <person name="Fujimori Y."/>
            <person name="Komiyama M."/>
            <person name="Tashiro H."/>
            <person name="Tanigami A."/>
            <person name="Fujiwara T."/>
            <person name="Ono T."/>
            <person name="Yamada K."/>
            <person name="Fujii Y."/>
            <person name="Ozaki K."/>
            <person name="Hirao M."/>
            <person name="Ohmori Y."/>
            <person name="Kawabata A."/>
            <person name="Hikiji T."/>
            <person name="Kobatake N."/>
            <person name="Inagaki H."/>
            <person name="Ikema Y."/>
            <person name="Okamoto S."/>
            <person name="Okitani R."/>
            <person name="Kawakami T."/>
            <person name="Noguchi S."/>
            <person name="Itoh T."/>
            <person name="Shigeta K."/>
            <person name="Senba T."/>
            <person name="Matsumura K."/>
            <person name="Nakajima Y."/>
            <person name="Mizuno T."/>
            <person name="Morinaga M."/>
            <person name="Sasaki M."/>
            <person name="Togashi T."/>
            <person name="Oyama M."/>
            <person name="Hata H."/>
            <person name="Watanabe M."/>
            <person name="Komatsu T."/>
            <person name="Mizushima-Sugano J."/>
            <person name="Satoh T."/>
            <person name="Shirai Y."/>
            <person name="Takahashi Y."/>
            <person name="Nakagawa K."/>
            <person name="Okumura K."/>
            <person name="Nagase T."/>
            <person name="Nomura N."/>
            <person name="Kikuchi H."/>
            <person name="Masuho Y."/>
            <person name="Yamashita R."/>
            <person name="Nakai K."/>
            <person name="Yada T."/>
            <person name="Nakamura Y."/>
            <person name="Ohara O."/>
            <person name="Isogai T."/>
            <person name="Sugano S."/>
        </authorList>
    </citation>
    <scope>NUCLEOTIDE SEQUENCE [LARGE SCALE MRNA] (ISOFORMS 1 AND 2)</scope>
    <scope>VARIANT ASP-406</scope>
    <source>
        <tissue>Brain</tissue>
        <tissue>Cerebellum</tissue>
    </source>
</reference>
<reference key="3">
    <citation type="journal article" date="2007" name="BMC Genomics">
        <title>The full-ORF clone resource of the German cDNA consortium.</title>
        <authorList>
            <person name="Bechtel S."/>
            <person name="Rosenfelder H."/>
            <person name="Duda A."/>
            <person name="Schmidt C.P."/>
            <person name="Ernst U."/>
            <person name="Wellenreuther R."/>
            <person name="Mehrle A."/>
            <person name="Schuster C."/>
            <person name="Bahr A."/>
            <person name="Bloecker H."/>
            <person name="Heubner D."/>
            <person name="Hoerlein A."/>
            <person name="Michel G."/>
            <person name="Wedler H."/>
            <person name="Koehrer K."/>
            <person name="Ottenwaelder B."/>
            <person name="Poustka A."/>
            <person name="Wiemann S."/>
            <person name="Schupp I."/>
        </authorList>
    </citation>
    <scope>NUCLEOTIDE SEQUENCE [LARGE SCALE MRNA] (ISOFORM 1)</scope>
    <source>
        <tissue>Skeletal muscle</tissue>
    </source>
</reference>
<reference key="4">
    <citation type="journal article" date="2004" name="Nature">
        <title>The DNA sequence and biology of human chromosome 19.</title>
        <authorList>
            <person name="Grimwood J."/>
            <person name="Gordon L.A."/>
            <person name="Olsen A.S."/>
            <person name="Terry A."/>
            <person name="Schmutz J."/>
            <person name="Lamerdin J.E."/>
            <person name="Hellsten U."/>
            <person name="Goodstein D."/>
            <person name="Couronne O."/>
            <person name="Tran-Gyamfi M."/>
            <person name="Aerts A."/>
            <person name="Altherr M."/>
            <person name="Ashworth L."/>
            <person name="Bajorek E."/>
            <person name="Black S."/>
            <person name="Branscomb E."/>
            <person name="Caenepeel S."/>
            <person name="Carrano A.V."/>
            <person name="Caoile C."/>
            <person name="Chan Y.M."/>
            <person name="Christensen M."/>
            <person name="Cleland C.A."/>
            <person name="Copeland A."/>
            <person name="Dalin E."/>
            <person name="Dehal P."/>
            <person name="Denys M."/>
            <person name="Detter J.C."/>
            <person name="Escobar J."/>
            <person name="Flowers D."/>
            <person name="Fotopulos D."/>
            <person name="Garcia C."/>
            <person name="Georgescu A.M."/>
            <person name="Glavina T."/>
            <person name="Gomez M."/>
            <person name="Gonzales E."/>
            <person name="Groza M."/>
            <person name="Hammon N."/>
            <person name="Hawkins T."/>
            <person name="Haydu L."/>
            <person name="Ho I."/>
            <person name="Huang W."/>
            <person name="Israni S."/>
            <person name="Jett J."/>
            <person name="Kadner K."/>
            <person name="Kimball H."/>
            <person name="Kobayashi A."/>
            <person name="Larionov V."/>
            <person name="Leem S.-H."/>
            <person name="Lopez F."/>
            <person name="Lou Y."/>
            <person name="Lowry S."/>
            <person name="Malfatti S."/>
            <person name="Martinez D."/>
            <person name="McCready P.M."/>
            <person name="Medina C."/>
            <person name="Morgan J."/>
            <person name="Nelson K."/>
            <person name="Nolan M."/>
            <person name="Ovcharenko I."/>
            <person name="Pitluck S."/>
            <person name="Pollard M."/>
            <person name="Popkie A.P."/>
            <person name="Predki P."/>
            <person name="Quan G."/>
            <person name="Ramirez L."/>
            <person name="Rash S."/>
            <person name="Retterer J."/>
            <person name="Rodriguez A."/>
            <person name="Rogers S."/>
            <person name="Salamov A."/>
            <person name="Salazar A."/>
            <person name="She X."/>
            <person name="Smith D."/>
            <person name="Slezak T."/>
            <person name="Solovyev V."/>
            <person name="Thayer N."/>
            <person name="Tice H."/>
            <person name="Tsai M."/>
            <person name="Ustaszewska A."/>
            <person name="Vo N."/>
            <person name="Wagner M."/>
            <person name="Wheeler J."/>
            <person name="Wu K."/>
            <person name="Xie G."/>
            <person name="Yang J."/>
            <person name="Dubchak I."/>
            <person name="Furey T.S."/>
            <person name="DeJong P."/>
            <person name="Dickson M."/>
            <person name="Gordon D."/>
            <person name="Eichler E.E."/>
            <person name="Pennacchio L.A."/>
            <person name="Richardson P."/>
            <person name="Stubbs L."/>
            <person name="Rokhsar D.S."/>
            <person name="Myers R.M."/>
            <person name="Rubin E.M."/>
            <person name="Lucas S.M."/>
        </authorList>
    </citation>
    <scope>NUCLEOTIDE SEQUENCE [LARGE SCALE GENOMIC DNA]</scope>
</reference>
<reference key="5">
    <citation type="journal article" date="2004" name="Genome Res.">
        <title>The status, quality, and expansion of the NIH full-length cDNA project: the Mammalian Gene Collection (MGC).</title>
        <authorList>
            <consortium name="The MGC Project Team"/>
        </authorList>
    </citation>
    <scope>NUCLEOTIDE SEQUENCE [LARGE SCALE MRNA] (ISOFORM 1)</scope>
    <scope>VARIANT ASP-406</scope>
</reference>
<reference key="6">
    <citation type="journal article" date="2000" name="DNA Res.">
        <title>Prediction of the coding sequences of unidentified human genes. XVI. The complete sequences of 150 new cDNA clones from brain which code for large proteins in vitro.</title>
        <authorList>
            <person name="Nagase T."/>
            <person name="Kikuno R."/>
            <person name="Ishikawa K."/>
            <person name="Hirosawa M."/>
            <person name="Ohara O."/>
        </authorList>
    </citation>
    <scope>NUCLEOTIDE SEQUENCE [LARGE SCALE MRNA] OF 76-626 (ISOFORM 1)</scope>
    <scope>VARIANTS ILE-192; ASP-406 AND CYS-556</scope>
    <source>
        <tissue>Brain</tissue>
    </source>
</reference>
<reference key="7">
    <citation type="journal article" date="2006" name="Science">
        <title>The consensus coding sequences of human breast and colorectal cancers.</title>
        <authorList>
            <person name="Sjoeblom T."/>
            <person name="Jones S."/>
            <person name="Wood L.D."/>
            <person name="Parsons D.W."/>
            <person name="Lin J."/>
            <person name="Barber T.D."/>
            <person name="Mandelker D."/>
            <person name="Leary R.J."/>
            <person name="Ptak J."/>
            <person name="Silliman N."/>
            <person name="Szabo S."/>
            <person name="Buckhaults P."/>
            <person name="Farrell C."/>
            <person name="Meeh P."/>
            <person name="Markowitz S.D."/>
            <person name="Willis J."/>
            <person name="Dawson D."/>
            <person name="Willson J.K.V."/>
            <person name="Gazdar A.F."/>
            <person name="Hartigan J."/>
            <person name="Wu L."/>
            <person name="Liu C."/>
            <person name="Parmigiani G."/>
            <person name="Park B.H."/>
            <person name="Bachman K.E."/>
            <person name="Papadopoulos N."/>
            <person name="Vogelstein B."/>
            <person name="Kinzler K.W."/>
            <person name="Velculescu V.E."/>
        </authorList>
    </citation>
    <scope>VARIANT [LARGE SCALE ANALYSIS] CYS-361</scope>
</reference>
<dbReference type="EMBL" id="AF352026">
    <property type="protein sequence ID" value="AAK30252.1"/>
    <property type="molecule type" value="mRNA"/>
</dbReference>
<dbReference type="EMBL" id="AK291416">
    <property type="protein sequence ID" value="BAF84105.1"/>
    <property type="molecule type" value="mRNA"/>
</dbReference>
<dbReference type="EMBL" id="AK293908">
    <property type="protein sequence ID" value="BAG57293.1"/>
    <property type="molecule type" value="mRNA"/>
</dbReference>
<dbReference type="EMBL" id="AL831845">
    <property type="protein sequence ID" value="CAD38551.1"/>
    <property type="molecule type" value="mRNA"/>
</dbReference>
<dbReference type="EMBL" id="AC004696">
    <property type="status" value="NOT_ANNOTATED_CDS"/>
    <property type="molecule type" value="Genomic_DNA"/>
</dbReference>
<dbReference type="EMBL" id="AC005498">
    <property type="protein sequence ID" value="AAC32422.1"/>
    <property type="status" value="ALT_SEQ"/>
    <property type="molecule type" value="Genomic_DNA"/>
</dbReference>
<dbReference type="EMBL" id="BC125221">
    <property type="protein sequence ID" value="AAI25222.1"/>
    <property type="molecule type" value="mRNA"/>
</dbReference>
<dbReference type="EMBL" id="BC125222">
    <property type="protein sequence ID" value="AAI25223.1"/>
    <property type="molecule type" value="mRNA"/>
</dbReference>
<dbReference type="EMBL" id="AB037817">
    <property type="protein sequence ID" value="BAA92634.1"/>
    <property type="molecule type" value="mRNA"/>
</dbReference>
<dbReference type="CCDS" id="CCDS12945.1">
    <molecule id="Q9BX82-1"/>
</dbReference>
<dbReference type="RefSeq" id="NP_001308697.1">
    <property type="nucleotide sequence ID" value="NM_001321768.1"/>
</dbReference>
<dbReference type="RefSeq" id="NP_065864.2">
    <molecule id="Q9BX82-1"/>
    <property type="nucleotide sequence ID" value="NM_020813.4"/>
</dbReference>
<dbReference type="RefSeq" id="XP_011525450.1">
    <molecule id="Q9BX82-1"/>
    <property type="nucleotide sequence ID" value="XM_011527148.2"/>
</dbReference>
<dbReference type="RefSeq" id="XP_047295084.1">
    <molecule id="Q9BX82-1"/>
    <property type="nucleotide sequence ID" value="XM_047439128.1"/>
</dbReference>
<dbReference type="RefSeq" id="XP_047295085.1">
    <molecule id="Q9BX82-1"/>
    <property type="nucleotide sequence ID" value="XM_047439129.1"/>
</dbReference>
<dbReference type="SMR" id="Q9BX82"/>
<dbReference type="BioGRID" id="121626">
    <property type="interactions" value="14"/>
</dbReference>
<dbReference type="FunCoup" id="Q9BX82">
    <property type="interactions" value="370"/>
</dbReference>
<dbReference type="IntAct" id="Q9BX82">
    <property type="interactions" value="6"/>
</dbReference>
<dbReference type="STRING" id="9606.ENSP00000309161"/>
<dbReference type="GlyGen" id="Q9BX82">
    <property type="glycosylation" value="1 site, 1 O-linked glycan (1 site)"/>
</dbReference>
<dbReference type="iPTMnet" id="Q9BX82"/>
<dbReference type="PhosphoSitePlus" id="Q9BX82"/>
<dbReference type="BioMuta" id="ZNF471"/>
<dbReference type="DMDM" id="37999856"/>
<dbReference type="jPOST" id="Q9BX82"/>
<dbReference type="MassIVE" id="Q9BX82"/>
<dbReference type="PaxDb" id="9606-ENSP00000309161"/>
<dbReference type="PeptideAtlas" id="Q9BX82"/>
<dbReference type="ProteomicsDB" id="79379">
    <molecule id="Q9BX82-1"/>
</dbReference>
<dbReference type="Antibodypedia" id="33215">
    <property type="antibodies" value="105 antibodies from 16 providers"/>
</dbReference>
<dbReference type="DNASU" id="57573"/>
<dbReference type="Ensembl" id="ENST00000308031.10">
    <molecule id="Q9BX82-1"/>
    <property type="protein sequence ID" value="ENSP00000309161.4"/>
    <property type="gene ID" value="ENSG00000196263.8"/>
</dbReference>
<dbReference type="Ensembl" id="ENST00000591537.5">
    <molecule id="Q9BX82-2"/>
    <property type="protein sequence ID" value="ENSP00000466224.1"/>
    <property type="gene ID" value="ENSG00000196263.8"/>
</dbReference>
<dbReference type="GeneID" id="57573"/>
<dbReference type="KEGG" id="hsa:57573"/>
<dbReference type="MANE-Select" id="ENST00000308031.10">
    <property type="protein sequence ID" value="ENSP00000309161.4"/>
    <property type="RefSeq nucleotide sequence ID" value="NM_020813.4"/>
    <property type="RefSeq protein sequence ID" value="NP_065864.2"/>
</dbReference>
<dbReference type="UCSC" id="uc002qnh.4">
    <molecule id="Q9BX82-1"/>
    <property type="organism name" value="human"/>
</dbReference>
<dbReference type="AGR" id="HGNC:23226"/>
<dbReference type="CTD" id="57573"/>
<dbReference type="DisGeNET" id="57573"/>
<dbReference type="GeneCards" id="ZNF471"/>
<dbReference type="HGNC" id="HGNC:23226">
    <property type="gene designation" value="ZNF471"/>
</dbReference>
<dbReference type="HPA" id="ENSG00000196263">
    <property type="expression patterns" value="Low tissue specificity"/>
</dbReference>
<dbReference type="MIM" id="620162">
    <property type="type" value="gene"/>
</dbReference>
<dbReference type="neXtProt" id="NX_Q9BX82"/>
<dbReference type="OpenTargets" id="ENSG00000196263"/>
<dbReference type="PharmGKB" id="PA134940750"/>
<dbReference type="VEuPathDB" id="HostDB:ENSG00000196263"/>
<dbReference type="eggNOG" id="KOG1721">
    <property type="taxonomic scope" value="Eukaryota"/>
</dbReference>
<dbReference type="GeneTree" id="ENSGT00940000161954"/>
<dbReference type="HOGENOM" id="CLU_002678_44_3_1"/>
<dbReference type="InParanoid" id="Q9BX82"/>
<dbReference type="OMA" id="WEMKSEM"/>
<dbReference type="OrthoDB" id="9411774at2759"/>
<dbReference type="PAN-GO" id="Q9BX82">
    <property type="GO annotations" value="4 GO annotations based on evolutionary models"/>
</dbReference>
<dbReference type="PhylomeDB" id="Q9BX82"/>
<dbReference type="TreeFam" id="TF341817"/>
<dbReference type="PathwayCommons" id="Q9BX82"/>
<dbReference type="Reactome" id="R-HSA-212436">
    <property type="pathway name" value="Generic Transcription Pathway"/>
</dbReference>
<dbReference type="SignaLink" id="Q9BX82"/>
<dbReference type="BioGRID-ORCS" id="57573">
    <property type="hits" value="10 hits in 1166 CRISPR screens"/>
</dbReference>
<dbReference type="ChiTaRS" id="ZNF471">
    <property type="organism name" value="human"/>
</dbReference>
<dbReference type="GeneWiki" id="ZNF471"/>
<dbReference type="GenomeRNAi" id="57573"/>
<dbReference type="Pharos" id="Q9BX82">
    <property type="development level" value="Tbio"/>
</dbReference>
<dbReference type="PRO" id="PR:Q9BX82"/>
<dbReference type="Proteomes" id="UP000005640">
    <property type="component" value="Chromosome 19"/>
</dbReference>
<dbReference type="RNAct" id="Q9BX82">
    <property type="molecule type" value="protein"/>
</dbReference>
<dbReference type="Bgee" id="ENSG00000196263">
    <property type="expression patterns" value="Expressed in right uterine tube and 143 other cell types or tissues"/>
</dbReference>
<dbReference type="ExpressionAtlas" id="Q9BX82">
    <property type="expression patterns" value="baseline and differential"/>
</dbReference>
<dbReference type="GO" id="GO:0005634">
    <property type="term" value="C:nucleus"/>
    <property type="evidence" value="ECO:0000314"/>
    <property type="project" value="LIFEdb"/>
</dbReference>
<dbReference type="GO" id="GO:0000981">
    <property type="term" value="F:DNA-binding transcription factor activity, RNA polymerase II-specific"/>
    <property type="evidence" value="ECO:0000318"/>
    <property type="project" value="GO_Central"/>
</dbReference>
<dbReference type="GO" id="GO:0000978">
    <property type="term" value="F:RNA polymerase II cis-regulatory region sequence-specific DNA binding"/>
    <property type="evidence" value="ECO:0000318"/>
    <property type="project" value="GO_Central"/>
</dbReference>
<dbReference type="GO" id="GO:0008270">
    <property type="term" value="F:zinc ion binding"/>
    <property type="evidence" value="ECO:0007669"/>
    <property type="project" value="UniProtKB-KW"/>
</dbReference>
<dbReference type="GO" id="GO:0006357">
    <property type="term" value="P:regulation of transcription by RNA polymerase II"/>
    <property type="evidence" value="ECO:0000318"/>
    <property type="project" value="GO_Central"/>
</dbReference>
<dbReference type="CDD" id="cd07765">
    <property type="entry name" value="KRAB_A-box"/>
    <property type="match status" value="1"/>
</dbReference>
<dbReference type="FunFam" id="3.30.160.60:FF:004137">
    <property type="match status" value="1"/>
</dbReference>
<dbReference type="FunFam" id="3.30.160.60:FF:001220">
    <property type="entry name" value="ZFP28 zinc finger protein"/>
    <property type="match status" value="1"/>
</dbReference>
<dbReference type="FunFam" id="3.30.160.60:FF:001502">
    <property type="entry name" value="ZFP28 zinc finger protein"/>
    <property type="match status" value="1"/>
</dbReference>
<dbReference type="FunFam" id="3.30.160.60:FF:001158">
    <property type="entry name" value="zinc finger protein 22"/>
    <property type="match status" value="1"/>
</dbReference>
<dbReference type="FunFam" id="3.30.160.60:FF:002278">
    <property type="entry name" value="Zinc finger protein 320"/>
    <property type="match status" value="1"/>
</dbReference>
<dbReference type="FunFam" id="3.30.160.60:FF:002343">
    <property type="entry name" value="Zinc finger protein 33A"/>
    <property type="match status" value="1"/>
</dbReference>
<dbReference type="FunFam" id="3.30.160.60:FF:001498">
    <property type="entry name" value="Zinc finger protein 404"/>
    <property type="match status" value="1"/>
</dbReference>
<dbReference type="FunFam" id="3.30.160.60:FF:000801">
    <property type="entry name" value="zinc finger protein 461 isoform X2"/>
    <property type="match status" value="1"/>
</dbReference>
<dbReference type="FunFam" id="3.30.160.60:FF:000519">
    <property type="entry name" value="Zinc finger protein 470"/>
    <property type="match status" value="1"/>
</dbReference>
<dbReference type="FunFam" id="3.30.160.60:FF:002090">
    <property type="entry name" value="Zinc finger protein 473"/>
    <property type="match status" value="1"/>
</dbReference>
<dbReference type="FunFam" id="3.30.160.60:FF:002254">
    <property type="entry name" value="Zinc finger protein 540"/>
    <property type="match status" value="1"/>
</dbReference>
<dbReference type="FunFam" id="3.30.160.60:FF:000052">
    <property type="entry name" value="zinc finger protein 546 isoform X1"/>
    <property type="match status" value="1"/>
</dbReference>
<dbReference type="FunFam" id="3.30.160.60:FF:001270">
    <property type="entry name" value="zinc finger protein 583 isoform X1"/>
    <property type="match status" value="1"/>
</dbReference>
<dbReference type="FunFam" id="3.30.160.60:FF:000070">
    <property type="entry name" value="zinc finger protein 689 isoform X1"/>
    <property type="match status" value="2"/>
</dbReference>
<dbReference type="FunFam" id="3.30.160.60:FF:000427">
    <property type="entry name" value="Zinc finger with KRAB and SCAN domains 7"/>
    <property type="match status" value="1"/>
</dbReference>
<dbReference type="Gene3D" id="6.10.140.140">
    <property type="match status" value="1"/>
</dbReference>
<dbReference type="Gene3D" id="3.30.160.60">
    <property type="entry name" value="Classic Zinc Finger"/>
    <property type="match status" value="15"/>
</dbReference>
<dbReference type="InterPro" id="IPR001909">
    <property type="entry name" value="KRAB"/>
</dbReference>
<dbReference type="InterPro" id="IPR036051">
    <property type="entry name" value="KRAB_dom_sf"/>
</dbReference>
<dbReference type="InterPro" id="IPR036236">
    <property type="entry name" value="Znf_C2H2_sf"/>
</dbReference>
<dbReference type="InterPro" id="IPR013087">
    <property type="entry name" value="Znf_C2H2_type"/>
</dbReference>
<dbReference type="PANTHER" id="PTHR24379">
    <property type="entry name" value="KRAB AND ZINC FINGER DOMAIN-CONTAINING"/>
    <property type="match status" value="1"/>
</dbReference>
<dbReference type="PANTHER" id="PTHR24379:SF131">
    <property type="entry name" value="ZINC FINGER PROTEIN 737-LIKE-RELATED"/>
    <property type="match status" value="1"/>
</dbReference>
<dbReference type="Pfam" id="PF01352">
    <property type="entry name" value="KRAB"/>
    <property type="match status" value="1"/>
</dbReference>
<dbReference type="Pfam" id="PF00096">
    <property type="entry name" value="zf-C2H2"/>
    <property type="match status" value="14"/>
</dbReference>
<dbReference type="SMART" id="SM00349">
    <property type="entry name" value="KRAB"/>
    <property type="match status" value="1"/>
</dbReference>
<dbReference type="SMART" id="SM00355">
    <property type="entry name" value="ZnF_C2H2"/>
    <property type="match status" value="15"/>
</dbReference>
<dbReference type="SUPFAM" id="SSF57667">
    <property type="entry name" value="beta-beta-alpha zinc fingers"/>
    <property type="match status" value="8"/>
</dbReference>
<dbReference type="SUPFAM" id="SSF109640">
    <property type="entry name" value="KRAB domain (Kruppel-associated box)"/>
    <property type="match status" value="1"/>
</dbReference>
<dbReference type="PROSITE" id="PS50805">
    <property type="entry name" value="KRAB"/>
    <property type="match status" value="1"/>
</dbReference>
<dbReference type="PROSITE" id="PS00028">
    <property type="entry name" value="ZINC_FINGER_C2H2_1"/>
    <property type="match status" value="15"/>
</dbReference>
<dbReference type="PROSITE" id="PS50157">
    <property type="entry name" value="ZINC_FINGER_C2H2_2"/>
    <property type="match status" value="15"/>
</dbReference>
<evidence type="ECO:0000255" key="1">
    <source>
        <dbReference type="PROSITE-ProRule" id="PRU00042"/>
    </source>
</evidence>
<evidence type="ECO:0000255" key="2">
    <source>
        <dbReference type="PROSITE-ProRule" id="PRU00119"/>
    </source>
</evidence>
<evidence type="ECO:0000269" key="3">
    <source>
    </source>
</evidence>
<evidence type="ECO:0000269" key="4">
    <source>
    </source>
</evidence>
<evidence type="ECO:0000269" key="5">
    <source>
    </source>
</evidence>
<evidence type="ECO:0000269" key="6">
    <source>
    </source>
</evidence>
<evidence type="ECO:0000303" key="7">
    <source>
    </source>
</evidence>
<evidence type="ECO:0000305" key="8"/>
<name>ZN471_HUMAN</name>
<proteinExistence type="evidence at protein level"/>
<comment type="function">
    <text>May be involved in transcriptional regulation.</text>
</comment>
<comment type="interaction">
    <interactant intactId="EBI-2826668">
        <id>Q9BX82</id>
    </interactant>
    <interactant intactId="EBI-744695">
        <id>Q8N9N5</id>
        <label>BANP</label>
    </interactant>
    <organismsDiffer>false</organismsDiffer>
    <experiments>5</experiments>
</comment>
<comment type="subcellular location">
    <subcellularLocation>
        <location evidence="8">Nucleus</location>
    </subcellularLocation>
</comment>
<comment type="alternative products">
    <event type="alternative splicing"/>
    <isoform>
        <id>Q9BX82-1</id>
        <name>1</name>
        <sequence type="displayed"/>
    </isoform>
    <isoform>
        <id>Q9BX82-2</id>
        <name>2</name>
        <sequence type="described" ref="VSP_055955 VSP_055956"/>
    </isoform>
</comment>
<comment type="similarity">
    <text evidence="8">Belongs to the krueppel C2H2-type zinc-finger protein family.</text>
</comment>
<comment type="sequence caution" evidence="8">
    <conflict type="erroneous gene model prediction">
        <sequence resource="EMBL-CDS" id="AAC32422"/>
    </conflict>
</comment>
<gene>
    <name type="primary">ZNF471</name>
    <name type="synonym">ERP1</name>
    <name type="synonym">KIAA1396</name>
</gene>
<organism>
    <name type="scientific">Homo sapiens</name>
    <name type="common">Human</name>
    <dbReference type="NCBI Taxonomy" id="9606"/>
    <lineage>
        <taxon>Eukaryota</taxon>
        <taxon>Metazoa</taxon>
        <taxon>Chordata</taxon>
        <taxon>Craniata</taxon>
        <taxon>Vertebrata</taxon>
        <taxon>Euteleostomi</taxon>
        <taxon>Mammalia</taxon>
        <taxon>Eutheria</taxon>
        <taxon>Euarchontoglires</taxon>
        <taxon>Primates</taxon>
        <taxon>Haplorrhini</taxon>
        <taxon>Catarrhini</taxon>
        <taxon>Hominidae</taxon>
        <taxon>Homo</taxon>
    </lineage>
</organism>
<accession>Q9BX82</accession>
<accession>B4DF32</accession>
<accession>O75260</accession>
<accession>Q08AD6</accession>
<accession>Q08AD7</accession>
<accession>Q8N3V1</accession>
<accession>Q9P2F1</accession>
<feature type="chain" id="PRO_0000047603" description="Zinc finger protein 471">
    <location>
        <begin position="1"/>
        <end position="626"/>
    </location>
</feature>
<feature type="domain" description="KRAB" evidence="2">
    <location>
        <begin position="14"/>
        <end position="85"/>
    </location>
</feature>
<feature type="zinc finger region" description="C2H2-type 1" evidence="1">
    <location>
        <begin position="206"/>
        <end position="228"/>
    </location>
</feature>
<feature type="zinc finger region" description="C2H2-type 2" evidence="1">
    <location>
        <begin position="234"/>
        <end position="256"/>
    </location>
</feature>
<feature type="zinc finger region" description="C2H2-type 3" evidence="1">
    <location>
        <begin position="262"/>
        <end position="284"/>
    </location>
</feature>
<feature type="zinc finger region" description="C2H2-type 4" evidence="1">
    <location>
        <begin position="290"/>
        <end position="312"/>
    </location>
</feature>
<feature type="zinc finger region" description="C2H2-type 5" evidence="1">
    <location>
        <begin position="318"/>
        <end position="340"/>
    </location>
</feature>
<feature type="zinc finger region" description="C2H2-type 6" evidence="1">
    <location>
        <begin position="346"/>
        <end position="369"/>
    </location>
</feature>
<feature type="zinc finger region" description="C2H2-type 7" evidence="1">
    <location>
        <begin position="375"/>
        <end position="397"/>
    </location>
</feature>
<feature type="zinc finger region" description="C2H2-type 8" evidence="1">
    <location>
        <begin position="403"/>
        <end position="425"/>
    </location>
</feature>
<feature type="zinc finger region" description="C2H2-type 9" evidence="1">
    <location>
        <begin position="431"/>
        <end position="453"/>
    </location>
</feature>
<feature type="zinc finger region" description="C2H2-type 10" evidence="1">
    <location>
        <begin position="459"/>
        <end position="481"/>
    </location>
</feature>
<feature type="zinc finger region" description="C2H2-type 11" evidence="1">
    <location>
        <begin position="487"/>
        <end position="509"/>
    </location>
</feature>
<feature type="zinc finger region" description="C2H2-type 12" evidence="1">
    <location>
        <begin position="515"/>
        <end position="537"/>
    </location>
</feature>
<feature type="zinc finger region" description="C2H2-type 13" evidence="1">
    <location>
        <begin position="543"/>
        <end position="565"/>
    </location>
</feature>
<feature type="zinc finger region" description="C2H2-type 14" evidence="1">
    <location>
        <begin position="571"/>
        <end position="593"/>
    </location>
</feature>
<feature type="zinc finger region" description="C2H2-type 15" evidence="1">
    <location>
        <begin position="599"/>
        <end position="621"/>
    </location>
</feature>
<feature type="splice variant" id="VSP_055955" description="In isoform 2." evidence="7">
    <original>DWESIYVTQELPLKQFMYDDACMEGITSYGLECSTFEENWKWEDLFEKQMGSHEMFSKKEIITHKETITKETEFKYTKFGKCIHLENIEESIYNHTSDKKSFSKNSMVIKHKKVYVGKKLFKCNECDKTFTHSSSLTVHFRIHTGEKPYACEECGKAFKQRQ</original>
    <variation>EFILVKNHMHVRNVEKPSSKGNTLLNITEHILERNSLNVKNVGKPSNKVNTLFSIKEFILEKNHINVRNAEKPSDSLHTLLSIREFILERNPMNVKNVAKPSVMARLLLDIRDVTLAKDPMNVLSVGRLLGITHLLFVTGGVIILERSLLIALIVGKPSVFT</variation>
    <location>
        <begin position="86"/>
        <end position="247"/>
    </location>
</feature>
<feature type="splice variant" id="VSP_055956" description="In isoform 2." evidence="7">
    <location>
        <begin position="248"/>
        <end position="626"/>
    </location>
</feature>
<feature type="sequence variant" id="VAR_052836" description="In dbSNP:rs11667052." evidence="3">
    <original>M</original>
    <variation>I</variation>
    <location>
        <position position="192"/>
    </location>
</feature>
<feature type="sequence variant" id="VAR_061951" description="In dbSNP:rs45487092.">
    <original>Q</original>
    <variation>R</variation>
    <location>
        <position position="309"/>
    </location>
</feature>
<feature type="sequence variant" id="VAR_035583" description="In a colorectal cancer sample; somatic mutation." evidence="6">
    <original>F</original>
    <variation>C</variation>
    <location>
        <position position="361"/>
    </location>
</feature>
<feature type="sequence variant" id="VAR_052837" description="In dbSNP:rs3752176." evidence="3 4 5">
    <original>G</original>
    <variation>D</variation>
    <location>
        <position position="406"/>
    </location>
</feature>
<feature type="sequence variant" id="VAR_052838" description="In dbSNP:rs16987303." evidence="3">
    <original>S</original>
    <variation>C</variation>
    <location>
        <position position="556"/>
    </location>
</feature>
<feature type="sequence conflict" description="In Ref. 3; CAD38551." evidence="8" ref="3">
    <original>Y</original>
    <variation>C</variation>
    <location>
        <position position="61"/>
    </location>
</feature>
<feature type="sequence conflict" description="In Ref. 3; CAD38551." evidence="8" ref="3">
    <original>V</original>
    <variation>A</variation>
    <location>
        <position position="407"/>
    </location>
</feature>
<protein>
    <recommendedName>
        <fullName>Zinc finger protein 471</fullName>
    </recommendedName>
    <alternativeName>
        <fullName>EZFIT-related protein 1</fullName>
    </alternativeName>
</protein>
<keyword id="KW-0025">Alternative splicing</keyword>
<keyword id="KW-0238">DNA-binding</keyword>
<keyword id="KW-0479">Metal-binding</keyword>
<keyword id="KW-0539">Nucleus</keyword>
<keyword id="KW-1267">Proteomics identification</keyword>
<keyword id="KW-1185">Reference proteome</keyword>
<keyword id="KW-0677">Repeat</keyword>
<keyword id="KW-0804">Transcription</keyword>
<keyword id="KW-0805">Transcription regulation</keyword>
<keyword id="KW-0862">Zinc</keyword>
<keyword id="KW-0863">Zinc-finger</keyword>